<feature type="chain" id="PRO_0000157125" description="Divalent-cation tolerance protein CutA">
    <location>
        <begin position="1"/>
        <end position="112"/>
    </location>
</feature>
<feature type="binding site" evidence="1">
    <location>
        <position position="16"/>
    </location>
    <ligand>
        <name>Cu cation</name>
        <dbReference type="ChEBI" id="CHEBI:23378"/>
    </ligand>
</feature>
<feature type="binding site" evidence="1">
    <location>
        <position position="83"/>
    </location>
    <ligand>
        <name>Cu cation</name>
        <dbReference type="ChEBI" id="CHEBI:23378"/>
    </ligand>
</feature>
<feature type="binding site" evidence="1">
    <location>
        <position position="84"/>
    </location>
    <ligand>
        <name>Cu cation</name>
        <dbReference type="ChEBI" id="CHEBI:23378"/>
    </ligand>
</feature>
<comment type="function">
    <text evidence="1">Involved in resistance toward heavy metals.</text>
</comment>
<comment type="cofactor">
    <cofactor evidence="1">
        <name>Cu cation</name>
        <dbReference type="ChEBI" id="CHEBI:23378"/>
    </cofactor>
    <text evidence="1">Binds 1 copper ion per subunit.</text>
</comment>
<comment type="subunit">
    <text evidence="1">Homotrimer.</text>
</comment>
<comment type="subcellular location">
    <subcellularLocation>
        <location evidence="1">Cytoplasm</location>
    </subcellularLocation>
</comment>
<comment type="similarity">
    <text evidence="1">Belongs to the CutA family.</text>
</comment>
<proteinExistence type="inferred from homology"/>
<reference key="1">
    <citation type="journal article" date="2002" name="Nucleic Acids Res.">
        <title>Genome sequence of Shigella flexneri 2a: insights into pathogenicity through comparison with genomes of Escherichia coli K12 and O157.</title>
        <authorList>
            <person name="Jin Q."/>
            <person name="Yuan Z."/>
            <person name="Xu J."/>
            <person name="Wang Y."/>
            <person name="Shen Y."/>
            <person name="Lu W."/>
            <person name="Wang J."/>
            <person name="Liu H."/>
            <person name="Yang J."/>
            <person name="Yang F."/>
            <person name="Zhang X."/>
            <person name="Zhang J."/>
            <person name="Yang G."/>
            <person name="Wu H."/>
            <person name="Qu D."/>
            <person name="Dong J."/>
            <person name="Sun L."/>
            <person name="Xue Y."/>
            <person name="Zhao A."/>
            <person name="Gao Y."/>
            <person name="Zhu J."/>
            <person name="Kan B."/>
            <person name="Ding K."/>
            <person name="Chen S."/>
            <person name="Cheng H."/>
            <person name="Yao Z."/>
            <person name="He B."/>
            <person name="Chen R."/>
            <person name="Ma D."/>
            <person name="Qiang B."/>
            <person name="Wen Y."/>
            <person name="Hou Y."/>
            <person name="Yu J."/>
        </authorList>
    </citation>
    <scope>NUCLEOTIDE SEQUENCE [LARGE SCALE GENOMIC DNA]</scope>
    <source>
        <strain>301 / Serotype 2a</strain>
    </source>
</reference>
<reference key="2">
    <citation type="journal article" date="2003" name="Infect. Immun.">
        <title>Complete genome sequence and comparative genomics of Shigella flexneri serotype 2a strain 2457T.</title>
        <authorList>
            <person name="Wei J."/>
            <person name="Goldberg M.B."/>
            <person name="Burland V."/>
            <person name="Venkatesan M.M."/>
            <person name="Deng W."/>
            <person name="Fournier G."/>
            <person name="Mayhew G.F."/>
            <person name="Plunkett G. III"/>
            <person name="Rose D.J."/>
            <person name="Darling A."/>
            <person name="Mau B."/>
            <person name="Perna N.T."/>
            <person name="Payne S.M."/>
            <person name="Runyen-Janecky L.J."/>
            <person name="Zhou S."/>
            <person name="Schwartz D.C."/>
            <person name="Blattner F.R."/>
        </authorList>
    </citation>
    <scope>NUCLEOTIDE SEQUENCE [LARGE SCALE GENOMIC DNA]</scope>
    <source>
        <strain>ATCC 700930 / 2457T / Serotype 2a</strain>
    </source>
</reference>
<sequence length="112" mass="12361">MLDEKSSNTTSVVVLCTAPDEATAQDLAAKVLAEKLAACATLIPGATSLYYWEGKLEQEYEVQMILKTTVSHQQALLECLKSHHPYQTPELLVLPVTHGDTDYLSWLNASLR</sequence>
<dbReference type="EMBL" id="AE005674">
    <property type="protein sequence ID" value="AAN45709.2"/>
    <property type="molecule type" value="Genomic_DNA"/>
</dbReference>
<dbReference type="EMBL" id="AE014073">
    <property type="protein sequence ID" value="AAP19495.1"/>
    <property type="molecule type" value="Genomic_DNA"/>
</dbReference>
<dbReference type="RefSeq" id="NP_710002.2">
    <property type="nucleotide sequence ID" value="NC_004337.2"/>
</dbReference>
<dbReference type="RefSeq" id="WP_000883409.1">
    <property type="nucleotide sequence ID" value="NZ_WPGW01000108.1"/>
</dbReference>
<dbReference type="SMR" id="Q83P43"/>
<dbReference type="STRING" id="198214.SF4291"/>
<dbReference type="PaxDb" id="198214-SF4291"/>
<dbReference type="GeneID" id="1027771"/>
<dbReference type="KEGG" id="sfl:SF4291"/>
<dbReference type="KEGG" id="sfx:S4558"/>
<dbReference type="PATRIC" id="fig|198214.7.peg.5061"/>
<dbReference type="HOGENOM" id="CLU_098807_3_0_6"/>
<dbReference type="Proteomes" id="UP000001006">
    <property type="component" value="Chromosome"/>
</dbReference>
<dbReference type="Proteomes" id="UP000002673">
    <property type="component" value="Chromosome"/>
</dbReference>
<dbReference type="GO" id="GO:0005737">
    <property type="term" value="C:cytoplasm"/>
    <property type="evidence" value="ECO:0007669"/>
    <property type="project" value="UniProtKB-SubCell"/>
</dbReference>
<dbReference type="GO" id="GO:0005507">
    <property type="term" value="F:copper ion binding"/>
    <property type="evidence" value="ECO:0007669"/>
    <property type="project" value="UniProtKB-UniRule"/>
</dbReference>
<dbReference type="GO" id="GO:0010038">
    <property type="term" value="P:response to metal ion"/>
    <property type="evidence" value="ECO:0007669"/>
    <property type="project" value="InterPro"/>
</dbReference>
<dbReference type="FunFam" id="3.30.70.120:FF:000004">
    <property type="entry name" value="Divalent-cation tolerance protein CutA"/>
    <property type="match status" value="1"/>
</dbReference>
<dbReference type="Gene3D" id="3.30.70.120">
    <property type="match status" value="1"/>
</dbReference>
<dbReference type="HAMAP" id="MF_01160">
    <property type="entry name" value="CutA"/>
    <property type="match status" value="1"/>
</dbReference>
<dbReference type="InterPro" id="IPR023700">
    <property type="entry name" value="CutA_Enterobact"/>
</dbReference>
<dbReference type="InterPro" id="IPR004323">
    <property type="entry name" value="Ion_tolerance_CutA"/>
</dbReference>
<dbReference type="InterPro" id="IPR011322">
    <property type="entry name" value="N-reg_PII-like_a/b"/>
</dbReference>
<dbReference type="InterPro" id="IPR015867">
    <property type="entry name" value="N-reg_PII/ATP_PRibTrfase_C"/>
</dbReference>
<dbReference type="NCBIfam" id="NF007930">
    <property type="entry name" value="PRK10645.1"/>
    <property type="match status" value="1"/>
</dbReference>
<dbReference type="PANTHER" id="PTHR23419">
    <property type="entry name" value="DIVALENT CATION TOLERANCE CUTA-RELATED"/>
    <property type="match status" value="1"/>
</dbReference>
<dbReference type="PANTHER" id="PTHR23419:SF8">
    <property type="entry name" value="FI09726P"/>
    <property type="match status" value="1"/>
</dbReference>
<dbReference type="Pfam" id="PF03091">
    <property type="entry name" value="CutA1"/>
    <property type="match status" value="1"/>
</dbReference>
<dbReference type="SUPFAM" id="SSF54913">
    <property type="entry name" value="GlnB-like"/>
    <property type="match status" value="1"/>
</dbReference>
<protein>
    <recommendedName>
        <fullName evidence="1">Divalent-cation tolerance protein CutA</fullName>
    </recommendedName>
</protein>
<accession>Q83P43</accession>
<accession>Q7UAM2</accession>
<organism>
    <name type="scientific">Shigella flexneri</name>
    <dbReference type="NCBI Taxonomy" id="623"/>
    <lineage>
        <taxon>Bacteria</taxon>
        <taxon>Pseudomonadati</taxon>
        <taxon>Pseudomonadota</taxon>
        <taxon>Gammaproteobacteria</taxon>
        <taxon>Enterobacterales</taxon>
        <taxon>Enterobacteriaceae</taxon>
        <taxon>Shigella</taxon>
    </lineage>
</organism>
<keyword id="KW-0186">Copper</keyword>
<keyword id="KW-0963">Cytoplasm</keyword>
<keyword id="KW-0479">Metal-binding</keyword>
<keyword id="KW-1185">Reference proteome</keyword>
<gene>
    <name evidence="1" type="primary">cutA</name>
    <name type="ordered locus">SF4291</name>
    <name type="ordered locus">S4558</name>
</gene>
<evidence type="ECO:0000255" key="1">
    <source>
        <dbReference type="HAMAP-Rule" id="MF_01160"/>
    </source>
</evidence>
<name>CUTA_SHIFL</name>